<proteinExistence type="inferred from homology"/>
<sequence>MMDKRVVAVAAVLWNVQMLFAAGEVIVPEGYASYYAESFNGRPTASGEIFDMNAYTAAHRTLPFGTVVELTNLDNGKKVIVRINDRGPYAANREIDVSKAAAVALDMLNAGVARVSIHKADPNAHASQQRNDRQTSPGVLPQDSFGVPPTAPTSSAPVMYADPHNPPPAPVGRRAGTPGVPGVANTTDVPASEYGAPPVAYAAPGSTPSRVPYGTAVPGSAAPNSHAQPVPSSSSYAAAAPLPYAAGGGKVSGMKSVYTPTHSGETRGVLWRIQLGAFVREENALRLVVKCARRALILHMSEQSTRCAWCCRGYAPRT</sequence>
<dbReference type="EC" id="4.2.2.-" evidence="1"/>
<dbReference type="EMBL" id="AE000520">
    <property type="protein sequence ID" value="AAC65949.1"/>
    <property type="molecule type" value="Genomic_DNA"/>
</dbReference>
<dbReference type="PIR" id="A71257">
    <property type="entry name" value="A71257"/>
</dbReference>
<dbReference type="RefSeq" id="WP_010882437.1">
    <property type="nucleotide sequence ID" value="NC_000919.1"/>
</dbReference>
<dbReference type="SMR" id="O83958"/>
<dbReference type="IntAct" id="O83958">
    <property type="interactions" value="284"/>
</dbReference>
<dbReference type="STRING" id="243276.TP_0993"/>
<dbReference type="EnsemblBacteria" id="AAC65949">
    <property type="protein sequence ID" value="AAC65949"/>
    <property type="gene ID" value="TP_0993"/>
</dbReference>
<dbReference type="KEGG" id="tpa:TP_0993"/>
<dbReference type="eggNOG" id="COG0797">
    <property type="taxonomic scope" value="Bacteria"/>
</dbReference>
<dbReference type="HOGENOM" id="CLU_042923_3_3_12"/>
<dbReference type="OrthoDB" id="9779128at2"/>
<dbReference type="Proteomes" id="UP000000811">
    <property type="component" value="Chromosome"/>
</dbReference>
<dbReference type="GO" id="GO:0008932">
    <property type="term" value="F:lytic endotransglycosylase activity"/>
    <property type="evidence" value="ECO:0007669"/>
    <property type="project" value="UniProtKB-UniRule"/>
</dbReference>
<dbReference type="GO" id="GO:0071555">
    <property type="term" value="P:cell wall organization"/>
    <property type="evidence" value="ECO:0007669"/>
    <property type="project" value="UniProtKB-KW"/>
</dbReference>
<dbReference type="GO" id="GO:0000270">
    <property type="term" value="P:peptidoglycan metabolic process"/>
    <property type="evidence" value="ECO:0007669"/>
    <property type="project" value="UniProtKB-UniRule"/>
</dbReference>
<dbReference type="CDD" id="cd22268">
    <property type="entry name" value="DPBB_RlpA-like"/>
    <property type="match status" value="1"/>
</dbReference>
<dbReference type="Gene3D" id="2.40.40.10">
    <property type="entry name" value="RlpA-like domain"/>
    <property type="match status" value="1"/>
</dbReference>
<dbReference type="HAMAP" id="MF_02071">
    <property type="entry name" value="RlpA"/>
    <property type="match status" value="1"/>
</dbReference>
<dbReference type="InterPro" id="IPR034718">
    <property type="entry name" value="RlpA"/>
</dbReference>
<dbReference type="InterPro" id="IPR009009">
    <property type="entry name" value="RlpA-like_DPBB"/>
</dbReference>
<dbReference type="InterPro" id="IPR036908">
    <property type="entry name" value="RlpA-like_sf"/>
</dbReference>
<dbReference type="InterPro" id="IPR012997">
    <property type="entry name" value="RplA"/>
</dbReference>
<dbReference type="NCBIfam" id="TIGR00413">
    <property type="entry name" value="rlpA"/>
    <property type="match status" value="1"/>
</dbReference>
<dbReference type="PANTHER" id="PTHR34183">
    <property type="entry name" value="ENDOLYTIC PEPTIDOGLYCAN TRANSGLYCOSYLASE RLPA"/>
    <property type="match status" value="1"/>
</dbReference>
<dbReference type="PANTHER" id="PTHR34183:SF1">
    <property type="entry name" value="ENDOLYTIC PEPTIDOGLYCAN TRANSGLYCOSYLASE RLPA"/>
    <property type="match status" value="1"/>
</dbReference>
<dbReference type="Pfam" id="PF03330">
    <property type="entry name" value="DPBB_1"/>
    <property type="match status" value="1"/>
</dbReference>
<dbReference type="SUPFAM" id="SSF50685">
    <property type="entry name" value="Barwin-like endoglucanases"/>
    <property type="match status" value="1"/>
</dbReference>
<accession>O83958</accession>
<evidence type="ECO:0000255" key="1">
    <source>
        <dbReference type="HAMAP-Rule" id="MF_02071"/>
    </source>
</evidence>
<evidence type="ECO:0000256" key="2">
    <source>
        <dbReference type="SAM" id="MobiDB-lite"/>
    </source>
</evidence>
<organism>
    <name type="scientific">Treponema pallidum (strain Nichols)</name>
    <dbReference type="NCBI Taxonomy" id="243276"/>
    <lineage>
        <taxon>Bacteria</taxon>
        <taxon>Pseudomonadati</taxon>
        <taxon>Spirochaetota</taxon>
        <taxon>Spirochaetia</taxon>
        <taxon>Spirochaetales</taxon>
        <taxon>Treponemataceae</taxon>
        <taxon>Treponema</taxon>
    </lineage>
</organism>
<gene>
    <name evidence="1" type="primary">rlpA</name>
    <name type="ordered locus">TP_0993</name>
</gene>
<reference key="1">
    <citation type="journal article" date="1998" name="Science">
        <title>Complete genome sequence of Treponema pallidum, the syphilis spirochete.</title>
        <authorList>
            <person name="Fraser C.M."/>
            <person name="Norris S.J."/>
            <person name="Weinstock G.M."/>
            <person name="White O."/>
            <person name="Sutton G.G."/>
            <person name="Dodson R.J."/>
            <person name="Gwinn M.L."/>
            <person name="Hickey E.K."/>
            <person name="Clayton R.A."/>
            <person name="Ketchum K.A."/>
            <person name="Sodergren E."/>
            <person name="Hardham J.M."/>
            <person name="McLeod M.P."/>
            <person name="Salzberg S.L."/>
            <person name="Peterson J.D."/>
            <person name="Khalak H.G."/>
            <person name="Richardson D.L."/>
            <person name="Howell J.K."/>
            <person name="Chidambaram M."/>
            <person name="Utterback T.R."/>
            <person name="McDonald L.A."/>
            <person name="Artiach P."/>
            <person name="Bowman C."/>
            <person name="Cotton M.D."/>
            <person name="Fujii C."/>
            <person name="Garland S.A."/>
            <person name="Hatch B."/>
            <person name="Horst K."/>
            <person name="Roberts K.M."/>
            <person name="Sandusky M."/>
            <person name="Weidman J.F."/>
            <person name="Smith H.O."/>
            <person name="Venter J.C."/>
        </authorList>
    </citation>
    <scope>NUCLEOTIDE SEQUENCE [LARGE SCALE GENOMIC DNA]</scope>
    <source>
        <strain>Nichols</strain>
    </source>
</reference>
<name>RLPA_TREPA</name>
<comment type="function">
    <text evidence="1">Lytic transglycosylase with a strong preference for naked glycan strands that lack stem peptides.</text>
</comment>
<comment type="similarity">
    <text evidence="1">Belongs to the RlpA family.</text>
</comment>
<protein>
    <recommendedName>
        <fullName evidence="1">Probable endolytic peptidoglycan transglycosylase RlpA</fullName>
        <ecNumber evidence="1">4.2.2.-</ecNumber>
    </recommendedName>
</protein>
<feature type="signal peptide" evidence="1">
    <location>
        <begin position="1"/>
        <end position="21"/>
    </location>
</feature>
<feature type="chain" id="PRO_0000030810" description="Probable endolytic peptidoglycan transglycosylase RlpA" evidence="1">
    <location>
        <begin position="22"/>
        <end position="318"/>
    </location>
</feature>
<feature type="region of interest" description="Disordered" evidence="2">
    <location>
        <begin position="121"/>
        <end position="191"/>
    </location>
</feature>
<feature type="compositionally biased region" description="Polar residues" evidence="2">
    <location>
        <begin position="125"/>
        <end position="137"/>
    </location>
</feature>
<keyword id="KW-0961">Cell wall biogenesis/degradation</keyword>
<keyword id="KW-0456">Lyase</keyword>
<keyword id="KW-1185">Reference proteome</keyword>
<keyword id="KW-0732">Signal</keyword>